<feature type="chain" id="PRO_0000282273" description="UPF0060 membrane protein Veis_0342">
    <location>
        <begin position="1"/>
        <end position="110"/>
    </location>
</feature>
<feature type="transmembrane region" description="Helical" evidence="1">
    <location>
        <begin position="8"/>
        <end position="28"/>
    </location>
</feature>
<feature type="transmembrane region" description="Helical" evidence="1">
    <location>
        <begin position="33"/>
        <end position="53"/>
    </location>
</feature>
<feature type="transmembrane region" description="Helical" evidence="1">
    <location>
        <begin position="63"/>
        <end position="83"/>
    </location>
</feature>
<feature type="transmembrane region" description="Helical" evidence="1">
    <location>
        <begin position="90"/>
        <end position="110"/>
    </location>
</feature>
<sequence length="110" mass="11906">MELLKATVLFTITAVVEIVGCYLPWLVIKQNKPLWLLLPAALSLALFAWLLTLHPSAAGRTYAAYGGIYIAVALAWLHWVDGVSLTRWDVAGATVAMVGMLIIMLQPASA</sequence>
<name>Y342_VEREI</name>
<organism>
    <name type="scientific">Verminephrobacter eiseniae (strain EF01-2)</name>
    <dbReference type="NCBI Taxonomy" id="391735"/>
    <lineage>
        <taxon>Bacteria</taxon>
        <taxon>Pseudomonadati</taxon>
        <taxon>Pseudomonadota</taxon>
        <taxon>Betaproteobacteria</taxon>
        <taxon>Burkholderiales</taxon>
        <taxon>Comamonadaceae</taxon>
        <taxon>Verminephrobacter</taxon>
    </lineage>
</organism>
<proteinExistence type="inferred from homology"/>
<comment type="subcellular location">
    <subcellularLocation>
        <location evidence="1">Cell inner membrane</location>
        <topology evidence="1">Multi-pass membrane protein</topology>
    </subcellularLocation>
</comment>
<comment type="similarity">
    <text evidence="1">Belongs to the UPF0060 family.</text>
</comment>
<gene>
    <name type="ordered locus">Veis_0342</name>
</gene>
<evidence type="ECO:0000255" key="1">
    <source>
        <dbReference type="HAMAP-Rule" id="MF_00010"/>
    </source>
</evidence>
<accession>A1WES5</accession>
<keyword id="KW-0997">Cell inner membrane</keyword>
<keyword id="KW-1003">Cell membrane</keyword>
<keyword id="KW-0472">Membrane</keyword>
<keyword id="KW-1185">Reference proteome</keyword>
<keyword id="KW-0812">Transmembrane</keyword>
<keyword id="KW-1133">Transmembrane helix</keyword>
<protein>
    <recommendedName>
        <fullName evidence="1">UPF0060 membrane protein Veis_0342</fullName>
    </recommendedName>
</protein>
<dbReference type="EMBL" id="CP000542">
    <property type="protein sequence ID" value="ABM56132.1"/>
    <property type="molecule type" value="Genomic_DNA"/>
</dbReference>
<dbReference type="RefSeq" id="WP_011808149.1">
    <property type="nucleotide sequence ID" value="NC_008786.1"/>
</dbReference>
<dbReference type="SMR" id="A1WES5"/>
<dbReference type="STRING" id="391735.Veis_0342"/>
<dbReference type="GeneID" id="76459078"/>
<dbReference type="KEGG" id="vei:Veis_0342"/>
<dbReference type="eggNOG" id="COG1742">
    <property type="taxonomic scope" value="Bacteria"/>
</dbReference>
<dbReference type="HOGENOM" id="CLU_117653_2_0_4"/>
<dbReference type="OrthoDB" id="123240at2"/>
<dbReference type="Proteomes" id="UP000000374">
    <property type="component" value="Chromosome"/>
</dbReference>
<dbReference type="GO" id="GO:0005886">
    <property type="term" value="C:plasma membrane"/>
    <property type="evidence" value="ECO:0007669"/>
    <property type="project" value="UniProtKB-SubCell"/>
</dbReference>
<dbReference type="HAMAP" id="MF_00010">
    <property type="entry name" value="UPF0060"/>
    <property type="match status" value="1"/>
</dbReference>
<dbReference type="InterPro" id="IPR003844">
    <property type="entry name" value="UPF0060"/>
</dbReference>
<dbReference type="NCBIfam" id="NF002586">
    <property type="entry name" value="PRK02237.1"/>
    <property type="match status" value="1"/>
</dbReference>
<dbReference type="PANTHER" id="PTHR36116">
    <property type="entry name" value="UPF0060 MEMBRANE PROTEIN YNFA"/>
    <property type="match status" value="1"/>
</dbReference>
<dbReference type="PANTHER" id="PTHR36116:SF1">
    <property type="entry name" value="UPF0060 MEMBRANE PROTEIN YNFA"/>
    <property type="match status" value="1"/>
</dbReference>
<dbReference type="Pfam" id="PF02694">
    <property type="entry name" value="UPF0060"/>
    <property type="match status" value="1"/>
</dbReference>
<dbReference type="SUPFAM" id="SSF103481">
    <property type="entry name" value="Multidrug resistance efflux transporter EmrE"/>
    <property type="match status" value="1"/>
</dbReference>
<reference key="1">
    <citation type="submission" date="2006-12" db="EMBL/GenBank/DDBJ databases">
        <title>Complete sequence of chromosome 1 of Verminephrobacter eiseniae EF01-2.</title>
        <authorList>
            <person name="Copeland A."/>
            <person name="Lucas S."/>
            <person name="Lapidus A."/>
            <person name="Barry K."/>
            <person name="Detter J.C."/>
            <person name="Glavina del Rio T."/>
            <person name="Dalin E."/>
            <person name="Tice H."/>
            <person name="Pitluck S."/>
            <person name="Chertkov O."/>
            <person name="Brettin T."/>
            <person name="Bruce D."/>
            <person name="Han C."/>
            <person name="Tapia R."/>
            <person name="Gilna P."/>
            <person name="Schmutz J."/>
            <person name="Larimer F."/>
            <person name="Land M."/>
            <person name="Hauser L."/>
            <person name="Kyrpides N."/>
            <person name="Kim E."/>
            <person name="Stahl D."/>
            <person name="Richardson P."/>
        </authorList>
    </citation>
    <scope>NUCLEOTIDE SEQUENCE [LARGE SCALE GENOMIC DNA]</scope>
    <source>
        <strain>EF01-2</strain>
    </source>
</reference>